<sequence length="646" mass="73140">MTDNANSQLVVRAKFNFQQTNEDELSFSKGDVIHVTRVEEGGWWEGTHNGRTGWFPSNYVREIKPSEKPVSPKSGTLKSPPKGFDTTAINKSYYNVVLQNILETEHEYSKELQSVLSTYLWPLQTSEKLSSANTSYLMGNLEEISSFQQVLVQSLEECTKSPEAQQRVGGCFLSLMPQMRTLYLAYCANHPSAVSVLTEHSEDLGEFMETKGASSPGILVLTTGLSKPFMRLDKYPTLLKELERHMEDYHPDRQDIQKSMTAFKNLSAQCQEVRKRKELELQILTEPIRSWEGDDIKTLGSVTYMSQVTIQCAGSEEKNERYLLLFPNLLLMLSASPRMSGFIYQGKLPTTGMTITKLEDSENHRNAFEISGSMIERILVSCNNQQDLHEWVEHLQRQTKVTSVSNPTIKPHSVPSHTLPSHPLTPSSKHADSKPVALTPAYHTLPHPSHHGTPHTTISWGPLEPPKTPKPWSLSCLRPAPPLRPSAALCYKEDLSRSPKTMKKLLPKRKPERKPSDEEFAVRKSTAALEEDAQILKVIEAYCTSAKTRQTLNSSSRKESAPQVLLPEEEKIIVEETKSNGQTVIEEKSLVDTVYALKDEVQELRQDNKKMKKSLEEEQRARKDLEKLVRKVLKNMNDPAWDETNL</sequence>
<organism>
    <name type="scientific">Rattus norvegicus</name>
    <name type="common">Rat</name>
    <dbReference type="NCBI Taxonomy" id="10116"/>
    <lineage>
        <taxon>Eukaryota</taxon>
        <taxon>Metazoa</taxon>
        <taxon>Chordata</taxon>
        <taxon>Craniata</taxon>
        <taxon>Vertebrata</taxon>
        <taxon>Euteleostomi</taxon>
        <taxon>Mammalia</taxon>
        <taxon>Eutheria</taxon>
        <taxon>Euarchontoglires</taxon>
        <taxon>Glires</taxon>
        <taxon>Rodentia</taxon>
        <taxon>Myomorpha</taxon>
        <taxon>Muroidea</taxon>
        <taxon>Muridae</taxon>
        <taxon>Murinae</taxon>
        <taxon>Rattus</taxon>
    </lineage>
</organism>
<gene>
    <name type="primary">Arhgef7</name>
    <name type="synonym">Pak3bp</name>
    <name type="synonym">Pixb</name>
</gene>
<protein>
    <recommendedName>
        <fullName>Rho guanine nucleotide exchange factor 7</fullName>
    </recommendedName>
    <alternativeName>
        <fullName>Beta-Pix</fullName>
    </alternativeName>
    <alternativeName>
        <fullName>PAK-interacting exchange factor beta</fullName>
    </alternativeName>
</protein>
<evidence type="ECO:0000250" key="1"/>
<evidence type="ECO:0000250" key="2">
    <source>
        <dbReference type="UniProtKB" id="Q14155"/>
    </source>
</evidence>
<evidence type="ECO:0000250" key="3">
    <source>
        <dbReference type="UniProtKB" id="Q9ES28"/>
    </source>
</evidence>
<evidence type="ECO:0000255" key="4">
    <source>
        <dbReference type="PROSITE-ProRule" id="PRU00062"/>
    </source>
</evidence>
<evidence type="ECO:0000255" key="5">
    <source>
        <dbReference type="PROSITE-ProRule" id="PRU00145"/>
    </source>
</evidence>
<evidence type="ECO:0000255" key="6">
    <source>
        <dbReference type="PROSITE-ProRule" id="PRU00192"/>
    </source>
</evidence>
<evidence type="ECO:0000256" key="7">
    <source>
        <dbReference type="SAM" id="MobiDB-lite"/>
    </source>
</evidence>
<evidence type="ECO:0007744" key="8">
    <source>
    </source>
</evidence>
<evidence type="ECO:0007829" key="9">
    <source>
        <dbReference type="PDB" id="2G6F"/>
    </source>
</evidence>
<evidence type="ECO:0007829" key="10">
    <source>
        <dbReference type="PDB" id="2W6B"/>
    </source>
</evidence>
<evidence type="ECO:0007829" key="11">
    <source>
        <dbReference type="PDB" id="3L4F"/>
    </source>
</evidence>
<name>ARHG7_RAT</name>
<feature type="chain" id="PRO_0000080923" description="Rho guanine nucleotide exchange factor 7">
    <location>
        <begin position="1"/>
        <end position="646"/>
    </location>
</feature>
<feature type="domain" description="SH3" evidence="6">
    <location>
        <begin position="6"/>
        <end position="65"/>
    </location>
</feature>
<feature type="domain" description="DH" evidence="4">
    <location>
        <begin position="93"/>
        <end position="273"/>
    </location>
</feature>
<feature type="domain" description="PH" evidence="5">
    <location>
        <begin position="295"/>
        <end position="400"/>
    </location>
</feature>
<feature type="region of interest" description="Disordered" evidence="7">
    <location>
        <begin position="402"/>
        <end position="464"/>
    </location>
</feature>
<feature type="region of interest" description="Disordered" evidence="7">
    <location>
        <begin position="500"/>
        <end position="520"/>
    </location>
</feature>
<feature type="compositionally biased region" description="Polar residues" evidence="7">
    <location>
        <begin position="415"/>
        <end position="428"/>
    </location>
</feature>
<feature type="compositionally biased region" description="Basic residues" evidence="7">
    <location>
        <begin position="500"/>
        <end position="512"/>
    </location>
</feature>
<feature type="modified residue" description="Phosphoserine" evidence="8">
    <location>
        <position position="7"/>
    </location>
</feature>
<feature type="modified residue" description="Phosphoserine" evidence="8">
    <location>
        <position position="71"/>
    </location>
</feature>
<feature type="modified residue" description="Phosphoserine" evidence="8">
    <location>
        <position position="79"/>
    </location>
</feature>
<feature type="modified residue" description="Phosphoserine" evidence="8">
    <location>
        <position position="340"/>
    </location>
</feature>
<feature type="modified residue" description="Phosphoserine" evidence="8">
    <location>
        <position position="516"/>
    </location>
</feature>
<feature type="modified residue" description="Phosphoserine" evidence="8">
    <location>
        <position position="560"/>
    </location>
</feature>
<feature type="strand" evidence="9">
    <location>
        <begin position="10"/>
        <end position="15"/>
    </location>
</feature>
<feature type="strand" evidence="9">
    <location>
        <begin position="32"/>
        <end position="38"/>
    </location>
</feature>
<feature type="strand" evidence="9">
    <location>
        <begin position="42"/>
        <end position="48"/>
    </location>
</feature>
<feature type="strand" evidence="9">
    <location>
        <begin position="51"/>
        <end position="56"/>
    </location>
</feature>
<feature type="helix" evidence="9">
    <location>
        <begin position="57"/>
        <end position="59"/>
    </location>
</feature>
<feature type="strand" evidence="9">
    <location>
        <begin position="60"/>
        <end position="62"/>
    </location>
</feature>
<feature type="helix" evidence="10">
    <location>
        <begin position="588"/>
        <end position="636"/>
    </location>
</feature>
<feature type="strand" evidence="11">
    <location>
        <begin position="640"/>
        <end position="645"/>
    </location>
</feature>
<keyword id="KW-0002">3D-structure</keyword>
<keyword id="KW-0965">Cell junction</keyword>
<keyword id="KW-0966">Cell projection</keyword>
<keyword id="KW-0963">Cytoplasm</keyword>
<keyword id="KW-0344">Guanine-nucleotide releasing factor</keyword>
<keyword id="KW-0524">Neurogenesis</keyword>
<keyword id="KW-0597">Phosphoprotein</keyword>
<keyword id="KW-1185">Reference proteome</keyword>
<keyword id="KW-0728">SH3 domain</keyword>
<proteinExistence type="evidence at protein level"/>
<dbReference type="EMBL" id="AF044673">
    <property type="protein sequence ID" value="AAC39971.1"/>
    <property type="molecule type" value="mRNA"/>
</dbReference>
<dbReference type="RefSeq" id="NP_001106994.1">
    <property type="nucleotide sequence ID" value="NM_001113522.1"/>
</dbReference>
<dbReference type="PDB" id="2AK5">
    <property type="method" value="X-ray"/>
    <property type="resolution" value="1.85 A"/>
    <property type="chains" value="A/B=5-66"/>
</dbReference>
<dbReference type="PDB" id="2DF6">
    <property type="method" value="X-ray"/>
    <property type="resolution" value="1.30 A"/>
    <property type="chains" value="A/B=10-63"/>
</dbReference>
<dbReference type="PDB" id="2G6F">
    <property type="method" value="X-ray"/>
    <property type="resolution" value="0.92 A"/>
    <property type="chains" value="X=10-63"/>
</dbReference>
<dbReference type="PDB" id="2P4R">
    <property type="method" value="X-ray"/>
    <property type="resolution" value="2.00 A"/>
    <property type="chains" value="A=10-63"/>
</dbReference>
<dbReference type="PDB" id="2W6B">
    <property type="method" value="X-ray"/>
    <property type="resolution" value="2.80 A"/>
    <property type="chains" value="A=588-638"/>
</dbReference>
<dbReference type="PDB" id="3L4F">
    <property type="method" value="X-ray"/>
    <property type="resolution" value="2.80 A"/>
    <property type="chains" value="A/B/C=587-646"/>
</dbReference>
<dbReference type="PDB" id="3QJN">
    <property type="method" value="X-ray"/>
    <property type="resolution" value="2.71 A"/>
    <property type="chains" value="I/J/K/L/M/N/O/P=640-646"/>
</dbReference>
<dbReference type="PDBsum" id="2AK5"/>
<dbReference type="PDBsum" id="2DF6"/>
<dbReference type="PDBsum" id="2G6F"/>
<dbReference type="PDBsum" id="2P4R"/>
<dbReference type="PDBsum" id="2W6B"/>
<dbReference type="PDBsum" id="3L4F"/>
<dbReference type="PDBsum" id="3QJN"/>
<dbReference type="SMR" id="O55043"/>
<dbReference type="BioGRID" id="250377">
    <property type="interactions" value="2"/>
</dbReference>
<dbReference type="DIP" id="DIP-41481N"/>
<dbReference type="ELM" id="O55043"/>
<dbReference type="FunCoup" id="O55043">
    <property type="interactions" value="4301"/>
</dbReference>
<dbReference type="IntAct" id="O55043">
    <property type="interactions" value="10"/>
</dbReference>
<dbReference type="MINT" id="O55043"/>
<dbReference type="STRING" id="10116.ENSRNOP00000043761"/>
<dbReference type="iPTMnet" id="O55043"/>
<dbReference type="PhosphoSitePlus" id="O55043"/>
<dbReference type="PaxDb" id="10116-ENSRNOP00000043761"/>
<dbReference type="PeptideAtlas" id="O55043"/>
<dbReference type="GeneID" id="114559"/>
<dbReference type="KEGG" id="rno:114559"/>
<dbReference type="UCSC" id="RGD:620624">
    <property type="organism name" value="rat"/>
</dbReference>
<dbReference type="AGR" id="RGD:620624"/>
<dbReference type="CTD" id="8874"/>
<dbReference type="RGD" id="620624">
    <property type="gene designation" value="Arhgef7"/>
</dbReference>
<dbReference type="VEuPathDB" id="HostDB:ENSRNOG00000012934"/>
<dbReference type="eggNOG" id="KOG2070">
    <property type="taxonomic scope" value="Eukaryota"/>
</dbReference>
<dbReference type="HOGENOM" id="CLU_017010_1_1_1"/>
<dbReference type="InParanoid" id="O55043"/>
<dbReference type="PhylomeDB" id="O55043"/>
<dbReference type="Reactome" id="R-RNO-182971">
    <property type="pathway name" value="EGFR downregulation"/>
</dbReference>
<dbReference type="Reactome" id="R-RNO-193648">
    <property type="pathway name" value="NRAGE signals death through JNK"/>
</dbReference>
<dbReference type="Reactome" id="R-RNO-3928664">
    <property type="pathway name" value="Ephrin signaling"/>
</dbReference>
<dbReference type="Reactome" id="R-RNO-416482">
    <property type="pathway name" value="G alpha (12/13) signalling events"/>
</dbReference>
<dbReference type="Reactome" id="R-RNO-8980692">
    <property type="pathway name" value="RHOA GTPase cycle"/>
</dbReference>
<dbReference type="Reactome" id="R-RNO-9013149">
    <property type="pathway name" value="RAC1 GTPase cycle"/>
</dbReference>
<dbReference type="Reactome" id="R-RNO-9013406">
    <property type="pathway name" value="RHOQ GTPase cycle"/>
</dbReference>
<dbReference type="Reactome" id="R-RNO-9013420">
    <property type="pathway name" value="RHOU GTPase cycle"/>
</dbReference>
<dbReference type="Reactome" id="R-RNO-9013424">
    <property type="pathway name" value="RHOV GTPase cycle"/>
</dbReference>
<dbReference type="EvolutionaryTrace" id="O55043"/>
<dbReference type="PRO" id="PR:O55043"/>
<dbReference type="Proteomes" id="UP000002494">
    <property type="component" value="Chromosome 16"/>
</dbReference>
<dbReference type="Bgee" id="ENSRNOG00000012934">
    <property type="expression patterns" value="Expressed in skeletal muscle tissue and 19 other cell types or tissues"/>
</dbReference>
<dbReference type="ExpressionAtlas" id="O55043">
    <property type="expression patterns" value="baseline and differential"/>
</dbReference>
<dbReference type="GO" id="GO:0005938">
    <property type="term" value="C:cell cortex"/>
    <property type="evidence" value="ECO:0007669"/>
    <property type="project" value="UniProtKB-SubCell"/>
</dbReference>
<dbReference type="GO" id="GO:0005813">
    <property type="term" value="C:centrosome"/>
    <property type="evidence" value="ECO:0000250"/>
    <property type="project" value="UniProtKB"/>
</dbReference>
<dbReference type="GO" id="GO:0005737">
    <property type="term" value="C:cytoplasm"/>
    <property type="evidence" value="ECO:0000318"/>
    <property type="project" value="GO_Central"/>
</dbReference>
<dbReference type="GO" id="GO:0005829">
    <property type="term" value="C:cytosol"/>
    <property type="evidence" value="ECO:0000266"/>
    <property type="project" value="RGD"/>
</dbReference>
<dbReference type="GO" id="GO:0005925">
    <property type="term" value="C:focal adhesion"/>
    <property type="evidence" value="ECO:0000314"/>
    <property type="project" value="RGD"/>
</dbReference>
<dbReference type="GO" id="GO:0098982">
    <property type="term" value="C:GABA-ergic synapse"/>
    <property type="evidence" value="ECO:0000314"/>
    <property type="project" value="SynGO"/>
</dbReference>
<dbReference type="GO" id="GO:0030426">
    <property type="term" value="C:growth cone"/>
    <property type="evidence" value="ECO:0000314"/>
    <property type="project" value="RGD"/>
</dbReference>
<dbReference type="GO" id="GO:0030027">
    <property type="term" value="C:lamellipodium"/>
    <property type="evidence" value="ECO:0000250"/>
    <property type="project" value="UniProtKB"/>
</dbReference>
<dbReference type="GO" id="GO:0097431">
    <property type="term" value="C:mitotic spindle pole"/>
    <property type="evidence" value="ECO:0000250"/>
    <property type="project" value="UniProtKB"/>
</dbReference>
<dbReference type="GO" id="GO:0043005">
    <property type="term" value="C:neuron projection"/>
    <property type="evidence" value="ECO:0000266"/>
    <property type="project" value="RGD"/>
</dbReference>
<dbReference type="GO" id="GO:0043025">
    <property type="term" value="C:neuronal cell body"/>
    <property type="evidence" value="ECO:0000266"/>
    <property type="project" value="RGD"/>
</dbReference>
<dbReference type="GO" id="GO:0005886">
    <property type="term" value="C:plasma membrane"/>
    <property type="evidence" value="ECO:0000266"/>
    <property type="project" value="RGD"/>
</dbReference>
<dbReference type="GO" id="GO:0098794">
    <property type="term" value="C:postsynapse"/>
    <property type="evidence" value="ECO:0000250"/>
    <property type="project" value="UniProtKB"/>
</dbReference>
<dbReference type="GO" id="GO:0032991">
    <property type="term" value="C:protein-containing complex"/>
    <property type="evidence" value="ECO:0000314"/>
    <property type="project" value="UniProtKB"/>
</dbReference>
<dbReference type="GO" id="GO:0001726">
    <property type="term" value="C:ruffle"/>
    <property type="evidence" value="ECO:0007669"/>
    <property type="project" value="UniProtKB-SubCell"/>
</dbReference>
<dbReference type="GO" id="GO:0000322">
    <property type="term" value="C:storage vacuole"/>
    <property type="evidence" value="ECO:0000266"/>
    <property type="project" value="RGD"/>
</dbReference>
<dbReference type="GO" id="GO:0043015">
    <property type="term" value="F:gamma-tubulin binding"/>
    <property type="evidence" value="ECO:0000250"/>
    <property type="project" value="UniProtKB"/>
</dbReference>
<dbReference type="GO" id="GO:0005085">
    <property type="term" value="F:guanyl-nucleotide exchange factor activity"/>
    <property type="evidence" value="ECO:0000266"/>
    <property type="project" value="RGD"/>
</dbReference>
<dbReference type="GO" id="GO:0019901">
    <property type="term" value="F:protein kinase binding"/>
    <property type="evidence" value="ECO:0000353"/>
    <property type="project" value="RGD"/>
</dbReference>
<dbReference type="GO" id="GO:0043615">
    <property type="term" value="P:astrocyte cell migration"/>
    <property type="evidence" value="ECO:0000315"/>
    <property type="project" value="RGD"/>
</dbReference>
<dbReference type="GO" id="GO:0007030">
    <property type="term" value="P:Golgi organization"/>
    <property type="evidence" value="ECO:0000266"/>
    <property type="project" value="RGD"/>
</dbReference>
<dbReference type="GO" id="GO:0002244">
    <property type="term" value="P:hematopoietic progenitor cell differentiation"/>
    <property type="evidence" value="ECO:0000266"/>
    <property type="project" value="RGD"/>
</dbReference>
<dbReference type="GO" id="GO:0030032">
    <property type="term" value="P:lamellipodium assembly"/>
    <property type="evidence" value="ECO:0000250"/>
    <property type="project" value="UniProtKB"/>
</dbReference>
<dbReference type="GO" id="GO:1905833">
    <property type="term" value="P:negative regulation of microtubule nucleation"/>
    <property type="evidence" value="ECO:0000250"/>
    <property type="project" value="UniProtKB"/>
</dbReference>
<dbReference type="GO" id="GO:0043065">
    <property type="term" value="P:positive regulation of apoptotic process"/>
    <property type="evidence" value="ECO:0000250"/>
    <property type="project" value="UniProtKB"/>
</dbReference>
<dbReference type="GO" id="GO:0060124">
    <property type="term" value="P:positive regulation of growth hormone secretion"/>
    <property type="evidence" value="ECO:0000266"/>
    <property type="project" value="RGD"/>
</dbReference>
<dbReference type="GO" id="GO:0098974">
    <property type="term" value="P:postsynaptic actin cytoskeleton organization"/>
    <property type="evidence" value="ECO:0000314"/>
    <property type="project" value="SynGO"/>
</dbReference>
<dbReference type="GO" id="GO:0099140">
    <property type="term" value="P:presynaptic actin cytoskeleton organization"/>
    <property type="evidence" value="ECO:0000314"/>
    <property type="project" value="SynGO"/>
</dbReference>
<dbReference type="GO" id="GO:0007266">
    <property type="term" value="P:Rho protein signal transduction"/>
    <property type="evidence" value="ECO:0000266"/>
    <property type="project" value="RGD"/>
</dbReference>
<dbReference type="GO" id="GO:0007264">
    <property type="term" value="P:small GTPase-mediated signal transduction"/>
    <property type="evidence" value="ECO:0000314"/>
    <property type="project" value="RGD"/>
</dbReference>
<dbReference type="CDD" id="cd01225">
    <property type="entry name" value="PH_Cool_Pix"/>
    <property type="match status" value="1"/>
</dbReference>
<dbReference type="CDD" id="cd00160">
    <property type="entry name" value="RhoGEF"/>
    <property type="match status" value="1"/>
</dbReference>
<dbReference type="CDD" id="cd12061">
    <property type="entry name" value="SH3_betaPIX"/>
    <property type="match status" value="1"/>
</dbReference>
<dbReference type="FunFam" id="2.30.30.40:FF:000034">
    <property type="entry name" value="Rho guanine nucleotide exchange factor (GEF) 7"/>
    <property type="match status" value="1"/>
</dbReference>
<dbReference type="FunFam" id="1.20.900.10:FF:000016">
    <property type="entry name" value="Rho guanine nucleotide exchange factor 6"/>
    <property type="match status" value="1"/>
</dbReference>
<dbReference type="FunFam" id="2.30.29.30:FF:000094">
    <property type="entry name" value="Rho guanine nucleotide exchange factor 7"/>
    <property type="match status" value="1"/>
</dbReference>
<dbReference type="FunFam" id="1.20.5.390:FF:000001">
    <property type="entry name" value="rho guanine nucleotide exchange factor 7 isoform X1"/>
    <property type="match status" value="1"/>
</dbReference>
<dbReference type="Gene3D" id="1.20.900.10">
    <property type="entry name" value="Dbl homology (DH) domain"/>
    <property type="match status" value="1"/>
</dbReference>
<dbReference type="Gene3D" id="1.20.5.390">
    <property type="entry name" value="L1 transposable element, trimerization domain"/>
    <property type="match status" value="1"/>
</dbReference>
<dbReference type="Gene3D" id="2.30.29.30">
    <property type="entry name" value="Pleckstrin-homology domain (PH domain)/Phosphotyrosine-binding domain (PTB)"/>
    <property type="match status" value="1"/>
</dbReference>
<dbReference type="Gene3D" id="2.30.30.40">
    <property type="entry name" value="SH3 Domains"/>
    <property type="match status" value="1"/>
</dbReference>
<dbReference type="InterPro" id="IPR035789">
    <property type="entry name" value="BetaPIX_SH3"/>
</dbReference>
<dbReference type="InterPro" id="IPR035899">
    <property type="entry name" value="DBL_dom_sf"/>
</dbReference>
<dbReference type="InterPro" id="IPR000219">
    <property type="entry name" value="DH_dom"/>
</dbReference>
<dbReference type="InterPro" id="IPR001331">
    <property type="entry name" value="GDS_CDC24_CS"/>
</dbReference>
<dbReference type="InterPro" id="IPR032409">
    <property type="entry name" value="GEF6/7_CC"/>
</dbReference>
<dbReference type="InterPro" id="IPR011993">
    <property type="entry name" value="PH-like_dom_sf"/>
</dbReference>
<dbReference type="InterPro" id="IPR046376">
    <property type="entry name" value="PH_Cool_Pix"/>
</dbReference>
<dbReference type="InterPro" id="IPR001849">
    <property type="entry name" value="PH_domain"/>
</dbReference>
<dbReference type="InterPro" id="IPR036028">
    <property type="entry name" value="SH3-like_dom_sf"/>
</dbReference>
<dbReference type="InterPro" id="IPR001452">
    <property type="entry name" value="SH3_domain"/>
</dbReference>
<dbReference type="PANTHER" id="PTHR46026:SF3">
    <property type="entry name" value="RHO GUANINE NUCLEOTIDE EXCHANGE FACTOR 7"/>
    <property type="match status" value="1"/>
</dbReference>
<dbReference type="PANTHER" id="PTHR46026">
    <property type="entry name" value="RHO-TYPE GUANINE NUCLEOTIDE EXCHANGE FACTOR, ISOFORM F"/>
    <property type="match status" value="1"/>
</dbReference>
<dbReference type="Pfam" id="PF16523">
    <property type="entry name" value="betaPIX_CC"/>
    <property type="match status" value="1"/>
</dbReference>
<dbReference type="Pfam" id="PF00169">
    <property type="entry name" value="PH"/>
    <property type="match status" value="1"/>
</dbReference>
<dbReference type="Pfam" id="PF00621">
    <property type="entry name" value="RhoGEF"/>
    <property type="match status" value="1"/>
</dbReference>
<dbReference type="Pfam" id="PF16614">
    <property type="entry name" value="RhoGEF67_u2"/>
    <property type="match status" value="1"/>
</dbReference>
<dbReference type="Pfam" id="PF07653">
    <property type="entry name" value="SH3_2"/>
    <property type="match status" value="1"/>
</dbReference>
<dbReference type="PRINTS" id="PR00452">
    <property type="entry name" value="SH3DOMAIN"/>
</dbReference>
<dbReference type="SMART" id="SM00233">
    <property type="entry name" value="PH"/>
    <property type="match status" value="1"/>
</dbReference>
<dbReference type="SMART" id="SM00325">
    <property type="entry name" value="RhoGEF"/>
    <property type="match status" value="1"/>
</dbReference>
<dbReference type="SMART" id="SM00326">
    <property type="entry name" value="SH3"/>
    <property type="match status" value="1"/>
</dbReference>
<dbReference type="SUPFAM" id="SSF48065">
    <property type="entry name" value="DBL homology domain (DH-domain)"/>
    <property type="match status" value="1"/>
</dbReference>
<dbReference type="SUPFAM" id="SSF50729">
    <property type="entry name" value="PH domain-like"/>
    <property type="match status" value="1"/>
</dbReference>
<dbReference type="SUPFAM" id="SSF50044">
    <property type="entry name" value="SH3-domain"/>
    <property type="match status" value="1"/>
</dbReference>
<dbReference type="PROSITE" id="PS00741">
    <property type="entry name" value="DH_1"/>
    <property type="match status" value="1"/>
</dbReference>
<dbReference type="PROSITE" id="PS50010">
    <property type="entry name" value="DH_2"/>
    <property type="match status" value="1"/>
</dbReference>
<dbReference type="PROSITE" id="PS50003">
    <property type="entry name" value="PH_DOMAIN"/>
    <property type="match status" value="1"/>
</dbReference>
<dbReference type="PROSITE" id="PS50002">
    <property type="entry name" value="SH3"/>
    <property type="match status" value="1"/>
</dbReference>
<comment type="function">
    <text evidence="1">Acts as a RAC1 guanine nucleotide exchange factor (GEF) and can induce membrane ruffling. Functions in cell migration, attachment and cell spreading. Promotes targeting of RAC1 to focal adhesions. May function as a positive regulator of apoptosis. Downstream of NMDA receptors and CaMKK-CaMK1 signaling cascade, promotes the formation of spines and synapses in hippocampal neurons (By similarity).</text>
</comment>
<comment type="subunit">
    <text evidence="2 3">Interacts with SCRIB; interaction is direct and may play a role in regulation of apoptosis (By similarity). Interacts with PAK kinases through the SH3 domain. Interacts with GIT1 and probably TGFB1I1. Interacts with ITCH and PARVB. Interacts with FRMPD4 (via N-terminus). Interacts with CaMK1. Interacts with PTK2/FAK1 and RAC1. Interacts with BIN2 (By similarity). Interacts with YWHAZ (By similarity). Interacts (via PH domain) with NOX1 (via FAD-binding FR-type domain) (By similarity).</text>
</comment>
<comment type="interaction">
    <interactant intactId="EBI-3649585">
        <id>O55043</id>
    </interactant>
    <interactant intactId="EBI-961694">
        <id>P26433</id>
        <label>Slc9a3</label>
    </interactant>
    <organismsDiffer>false</organismsDiffer>
    <experiments>3</experiments>
</comment>
<comment type="interaction">
    <interactant intactId="EBI-3649585">
        <id>O55043</id>
    </interactant>
    <interactant intactId="EBI-15555129">
        <id>Q13191-1</id>
        <label>CBLB</label>
    </interactant>
    <organismsDiffer>true</organismsDiffer>
    <experiments>2</experiments>
</comment>
<comment type="interaction">
    <interactant intactId="EBI-3649585">
        <id>O55043</id>
    </interactant>
    <interactant intactId="EBI-747693">
        <id>P41227</id>
        <label>NAA10</label>
    </interactant>
    <organismsDiffer>true</organismsDiffer>
    <experiments>3</experiments>
</comment>
<comment type="interaction">
    <interactant intactId="EBI-3649585">
        <id>O55043</id>
    </interactant>
    <interactant intactId="EBI-1045887">
        <id>Q13177</id>
        <label>PAK2</label>
    </interactant>
    <organismsDiffer>true</organismsDiffer>
    <experiments>8</experiments>
</comment>
<comment type="subcellular location">
    <subcellularLocation>
        <location evidence="1">Cell junction</location>
        <location evidence="1">Focal adhesion</location>
    </subcellularLocation>
    <subcellularLocation>
        <location evidence="1">Cell projection</location>
        <location evidence="1">Ruffle</location>
    </subcellularLocation>
    <subcellularLocation>
        <location evidence="1">Cytoplasm</location>
        <location evidence="1">Cell cortex</location>
    </subcellularLocation>
    <subcellularLocation>
        <location evidence="1">Cell projection</location>
        <location evidence="1">Lamellipodium</location>
    </subcellularLocation>
    <text>Detected at cell adhesions. A small proportion is detected at focal adhesions.</text>
</comment>
<comment type="PTM">
    <text evidence="1">Phosphorylated on Ser-516 by CaMK1; enhancement of GEF activity and downstream activation of RAC1. Phosphorylated by PTK2/FAK1; this promotes interaction with RAC1 (By similarity).</text>
</comment>
<reference key="1">
    <citation type="journal article" date="1998" name="Mol. Cell">
        <title>PAK kinases are directly coupled to the PIX family of nucleotide exchange factors.</title>
        <authorList>
            <person name="Manser E."/>
            <person name="Loo T.-H."/>
            <person name="Koh C.-G."/>
            <person name="Zhao Z.-S."/>
            <person name="Chen X.-Q."/>
            <person name="Tan L."/>
            <person name="Tan I."/>
            <person name="Leung T."/>
            <person name="Lim L."/>
        </authorList>
    </citation>
    <scope>NUCLEOTIDE SEQUENCE [MRNA]</scope>
</reference>
<reference key="2">
    <citation type="journal article" date="2000" name="J. Biol. Chem.">
        <title>The GIT family of ADP-ribosylation factor GTPase-activating proteins. Functional diversity of GIT2 through alternative splicing.</title>
        <authorList>
            <person name="Premont R.T."/>
            <person name="Claing A."/>
            <person name="Vitale N."/>
            <person name="Perry S.J."/>
            <person name="Lefkowitz R.J."/>
        </authorList>
    </citation>
    <scope>INTERACTION WITH GIT1</scope>
</reference>
<reference key="3">
    <citation type="journal article" date="2012" name="Nat. Commun.">
        <title>Quantitative maps of protein phosphorylation sites across 14 different rat organs and tissues.</title>
        <authorList>
            <person name="Lundby A."/>
            <person name="Secher A."/>
            <person name="Lage K."/>
            <person name="Nordsborg N.B."/>
            <person name="Dmytriyev A."/>
            <person name="Lundby C."/>
            <person name="Olsen J.V."/>
        </authorList>
    </citation>
    <scope>PHOSPHORYLATION [LARGE SCALE ANALYSIS] AT SER-7; SER-71; SER-79; SER-340; SER-516 AND SER-560</scope>
    <scope>IDENTIFICATION BY MASS SPECTROMETRY [LARGE SCALE ANALYSIS]</scope>
</reference>
<reference key="4">
    <citation type="journal article" date="2005" name="Nat. Struct. Mol. Biol.">
        <title>Cbl promotes clustering of endocytic adaptor proteins.</title>
        <authorList>
            <person name="Jozic D."/>
            <person name="Cardenes N."/>
            <person name="Deribe Y.L."/>
            <person name="Moncalian G."/>
            <person name="Hoeller D."/>
            <person name="Groemping Y."/>
            <person name="Dikic I."/>
            <person name="Rittinger K."/>
            <person name="Bravo J."/>
        </authorList>
    </citation>
    <scope>X-RAY CRYSTALLOGRAPHY (1.85 ANGSTROMS) OF 5-66</scope>
</reference>
<reference key="5">
    <citation type="journal article" date="2006" name="J. Mol. Biol.">
        <title>Crystal structure of the SH3 domain of betaPIX in complex with a high affinity peptide from PAK2.</title>
        <authorList>
            <person name="Hoelz A."/>
            <person name="Janz J.M."/>
            <person name="Lawrie S.D."/>
            <person name="Corwin B."/>
            <person name="Lee A."/>
            <person name="Sakmar T.P."/>
        </authorList>
    </citation>
    <scope>X-RAY CRYSTALLOGRAPHY (0.92 ANGSTROMS) OF 10-63 IN COMPLEX WITH PAK2</scope>
    <scope>SUBUNIT</scope>
</reference>
<reference key="6">
    <citation type="journal article" date="2007" name="J. Biol. Chem.">
        <title>A novel interaction between atrophin-interacting protein 4 and beta-p21-activated kinase-interactive exchange factor is mediated by an SH3 domain.</title>
        <authorList>
            <person name="Janz J.M."/>
            <person name="Sakmar T.P."/>
            <person name="Min K.C."/>
        </authorList>
    </citation>
    <scope>X-RAY CRYSTALLOGRAPHY (2.0 ANGSTROMS) OF 10-63 IN COMPLEX WITH ITCH</scope>
</reference>
<accession>O55043</accession>